<keyword id="KW-0133">Cell shape</keyword>
<keyword id="KW-0961">Cell wall biogenesis/degradation</keyword>
<keyword id="KW-0413">Isomerase</keyword>
<keyword id="KW-0573">Peptidoglycan synthesis</keyword>
<keyword id="KW-1185">Reference proteome</keyword>
<feature type="chain" id="PRO_0000095468" description="Glutamate racemase">
    <location>
        <begin position="1"/>
        <end position="273"/>
    </location>
</feature>
<feature type="active site" description="Proton donor/acceptor" evidence="1">
    <location>
        <position position="80"/>
    </location>
</feature>
<feature type="active site" description="Proton donor/acceptor" evidence="1">
    <location>
        <position position="190"/>
    </location>
</feature>
<feature type="binding site" evidence="1">
    <location>
        <begin position="17"/>
        <end position="18"/>
    </location>
    <ligand>
        <name>substrate</name>
    </ligand>
</feature>
<feature type="binding site" evidence="1">
    <location>
        <begin position="49"/>
        <end position="50"/>
    </location>
    <ligand>
        <name>substrate</name>
    </ligand>
</feature>
<feature type="binding site" evidence="1">
    <location>
        <begin position="81"/>
        <end position="82"/>
    </location>
    <ligand>
        <name>substrate</name>
    </ligand>
</feature>
<feature type="binding site" evidence="1">
    <location>
        <begin position="191"/>
        <end position="192"/>
    </location>
    <ligand>
        <name>substrate</name>
    </ligand>
</feature>
<feature type="sequence conflict" description="In Ref. 1; BAA78374." evidence="2" ref="1">
    <original>V</original>
    <variation>E</variation>
    <location>
        <position position="144"/>
    </location>
</feature>
<feature type="sequence conflict" description="In Ref. 1; BAA78374." evidence="2" ref="1">
    <original>Q</original>
    <variation>L</variation>
    <location>
        <position position="267"/>
    </location>
</feature>
<protein>
    <recommendedName>
        <fullName evidence="1">Glutamate racemase</fullName>
        <ecNumber evidence="1">5.1.1.3</ecNumber>
    </recommendedName>
</protein>
<evidence type="ECO:0000255" key="1">
    <source>
        <dbReference type="HAMAP-Rule" id="MF_00258"/>
    </source>
</evidence>
<evidence type="ECO:0000305" key="2"/>
<dbReference type="EC" id="5.1.1.3" evidence="1"/>
<dbReference type="EMBL" id="AB020624">
    <property type="protein sequence ID" value="BAA78374.1"/>
    <property type="status" value="ALT_INIT"/>
    <property type="molecule type" value="Genomic_DNA"/>
</dbReference>
<dbReference type="EMBL" id="BA000036">
    <property type="protein sequence ID" value="BAB99902.1"/>
    <property type="status" value="ALT_INIT"/>
    <property type="molecule type" value="Genomic_DNA"/>
</dbReference>
<dbReference type="EMBL" id="BX927155">
    <property type="protein sequence ID" value="CAF21172.1"/>
    <property type="status" value="ALT_INIT"/>
    <property type="molecule type" value="Genomic_DNA"/>
</dbReference>
<dbReference type="RefSeq" id="NP_601711.1">
    <property type="nucleotide sequence ID" value="NC_003450.3"/>
</dbReference>
<dbReference type="RefSeq" id="WP_011015179.1">
    <property type="nucleotide sequence ID" value="NC_003450.3"/>
</dbReference>
<dbReference type="SMR" id="Q9XDZ7"/>
<dbReference type="STRING" id="196627.cg2762"/>
<dbReference type="GeneID" id="1020457"/>
<dbReference type="KEGG" id="cgb:cg2762"/>
<dbReference type="KEGG" id="cgl:Cgl2509"/>
<dbReference type="PATRIC" id="fig|196627.13.peg.2442"/>
<dbReference type="eggNOG" id="COG0796">
    <property type="taxonomic scope" value="Bacteria"/>
</dbReference>
<dbReference type="HOGENOM" id="CLU_052344_0_1_11"/>
<dbReference type="OrthoDB" id="9801055at2"/>
<dbReference type="BioCyc" id="CORYNE:G18NG-12113-MONOMER"/>
<dbReference type="UniPathway" id="UPA00219"/>
<dbReference type="Proteomes" id="UP000000582">
    <property type="component" value="Chromosome"/>
</dbReference>
<dbReference type="Proteomes" id="UP000001009">
    <property type="component" value="Chromosome"/>
</dbReference>
<dbReference type="GO" id="GO:0008881">
    <property type="term" value="F:glutamate racemase activity"/>
    <property type="evidence" value="ECO:0007669"/>
    <property type="project" value="UniProtKB-UniRule"/>
</dbReference>
<dbReference type="GO" id="GO:0071555">
    <property type="term" value="P:cell wall organization"/>
    <property type="evidence" value="ECO:0007669"/>
    <property type="project" value="UniProtKB-KW"/>
</dbReference>
<dbReference type="GO" id="GO:0009252">
    <property type="term" value="P:peptidoglycan biosynthetic process"/>
    <property type="evidence" value="ECO:0007669"/>
    <property type="project" value="UniProtKB-UniRule"/>
</dbReference>
<dbReference type="GO" id="GO:0008360">
    <property type="term" value="P:regulation of cell shape"/>
    <property type="evidence" value="ECO:0007669"/>
    <property type="project" value="UniProtKB-KW"/>
</dbReference>
<dbReference type="FunFam" id="3.40.50.1860:FF:000002">
    <property type="entry name" value="Glutamate racemase"/>
    <property type="match status" value="1"/>
</dbReference>
<dbReference type="Gene3D" id="3.40.50.1860">
    <property type="match status" value="2"/>
</dbReference>
<dbReference type="HAMAP" id="MF_00258">
    <property type="entry name" value="Glu_racemase"/>
    <property type="match status" value="1"/>
</dbReference>
<dbReference type="InterPro" id="IPR015942">
    <property type="entry name" value="Asp/Glu/hydantoin_racemase"/>
</dbReference>
<dbReference type="InterPro" id="IPR001920">
    <property type="entry name" value="Asp/Glu_race"/>
</dbReference>
<dbReference type="InterPro" id="IPR018187">
    <property type="entry name" value="Asp/Glu_racemase_AS_1"/>
</dbReference>
<dbReference type="InterPro" id="IPR033134">
    <property type="entry name" value="Asp/Glu_racemase_AS_2"/>
</dbReference>
<dbReference type="InterPro" id="IPR004391">
    <property type="entry name" value="Glu_race"/>
</dbReference>
<dbReference type="NCBIfam" id="TIGR00067">
    <property type="entry name" value="glut_race"/>
    <property type="match status" value="1"/>
</dbReference>
<dbReference type="PANTHER" id="PTHR21198">
    <property type="entry name" value="GLUTAMATE RACEMASE"/>
    <property type="match status" value="1"/>
</dbReference>
<dbReference type="PANTHER" id="PTHR21198:SF2">
    <property type="entry name" value="GLUTAMATE RACEMASE"/>
    <property type="match status" value="1"/>
</dbReference>
<dbReference type="Pfam" id="PF01177">
    <property type="entry name" value="Asp_Glu_race"/>
    <property type="match status" value="1"/>
</dbReference>
<dbReference type="SUPFAM" id="SSF53681">
    <property type="entry name" value="Aspartate/glutamate racemase"/>
    <property type="match status" value="2"/>
</dbReference>
<dbReference type="PROSITE" id="PS00923">
    <property type="entry name" value="ASP_GLU_RACEMASE_1"/>
    <property type="match status" value="1"/>
</dbReference>
<dbReference type="PROSITE" id="PS00924">
    <property type="entry name" value="ASP_GLU_RACEMASE_2"/>
    <property type="match status" value="1"/>
</dbReference>
<gene>
    <name evidence="1" type="primary">murI</name>
    <name type="ordered locus">Cgl2509</name>
    <name type="ordered locus">cg2762</name>
</gene>
<organism>
    <name type="scientific">Corynebacterium glutamicum (strain ATCC 13032 / DSM 20300 / JCM 1318 / BCRC 11384 / CCUG 27702 / LMG 3730 / NBRC 12168 / NCIMB 10025 / NRRL B-2784 / 534)</name>
    <dbReference type="NCBI Taxonomy" id="196627"/>
    <lineage>
        <taxon>Bacteria</taxon>
        <taxon>Bacillati</taxon>
        <taxon>Actinomycetota</taxon>
        <taxon>Actinomycetes</taxon>
        <taxon>Mycobacteriales</taxon>
        <taxon>Corynebacteriaceae</taxon>
        <taxon>Corynebacterium</taxon>
    </lineage>
</organism>
<reference key="1">
    <citation type="journal article" date="1999" name="FEMS Microbiol. Lett.">
        <title>Isolation of the murI gene from Brevibacterium lactofermentum ATCC 13869 encoding D-glutamate racemase.</title>
        <authorList>
            <person name="Malathi K.C."/>
            <person name="Wachi M."/>
            <person name="Nagai K."/>
        </authorList>
    </citation>
    <scope>NUCLEOTIDE SEQUENCE [GENOMIC DNA]</scope>
    <source>
        <strain>ATCC 13869 / DSMZ 1412 / NCIMB 9567</strain>
    </source>
</reference>
<reference key="2">
    <citation type="journal article" date="2003" name="Appl. Microbiol. Biotechnol.">
        <title>The Corynebacterium glutamicum genome: features and impacts on biotechnological processes.</title>
        <authorList>
            <person name="Ikeda M."/>
            <person name="Nakagawa S."/>
        </authorList>
    </citation>
    <scope>NUCLEOTIDE SEQUENCE [LARGE SCALE GENOMIC DNA]</scope>
    <source>
        <strain>ATCC 13032 / DSM 20300 / JCM 1318 / BCRC 11384 / CCUG 27702 / LMG 3730 / NBRC 12168 / NCIMB 10025 / NRRL B-2784 / 534</strain>
    </source>
</reference>
<reference key="3">
    <citation type="journal article" date="2003" name="J. Biotechnol.">
        <title>The complete Corynebacterium glutamicum ATCC 13032 genome sequence and its impact on the production of L-aspartate-derived amino acids and vitamins.</title>
        <authorList>
            <person name="Kalinowski J."/>
            <person name="Bathe B."/>
            <person name="Bartels D."/>
            <person name="Bischoff N."/>
            <person name="Bott M."/>
            <person name="Burkovski A."/>
            <person name="Dusch N."/>
            <person name="Eggeling L."/>
            <person name="Eikmanns B.J."/>
            <person name="Gaigalat L."/>
            <person name="Goesmann A."/>
            <person name="Hartmann M."/>
            <person name="Huthmacher K."/>
            <person name="Kraemer R."/>
            <person name="Linke B."/>
            <person name="McHardy A.C."/>
            <person name="Meyer F."/>
            <person name="Moeckel B."/>
            <person name="Pfefferle W."/>
            <person name="Puehler A."/>
            <person name="Rey D.A."/>
            <person name="Rueckert C."/>
            <person name="Rupp O."/>
            <person name="Sahm H."/>
            <person name="Wendisch V.F."/>
            <person name="Wiegraebe I."/>
            <person name="Tauch A."/>
        </authorList>
    </citation>
    <scope>NUCLEOTIDE SEQUENCE [LARGE SCALE GENOMIC DNA]</scope>
    <source>
        <strain>ATCC 13032 / DSM 20300 / JCM 1318 / BCRC 11384 / CCUG 27702 / LMG 3730 / NBRC 12168 / NCIMB 10025 / NRRL B-2784 / 534</strain>
    </source>
</reference>
<accession>Q9XDZ7</accession>
<sequence length="273" mass="29230">MIERPVPGADAPIGIFDSGVGGLTVARTIIDQLPHESVIYIGDTANGPYGPLPIAKVREHAIRIADELVERGCKMIVIACNTASAAFLRDARERYSVPVVEVILPAVRRAVASTRNGKVGVIGTVGTINSGAYQDLFSASPSIVVNAVACPRFVDFVERGITSGRQILNIAQDYLEPLQAEGVDTLVLGCTHYPLLSGVIQLAMGDHVSLVSSAEETAKDVLRILSQQDLLADPDMHPEPSYSFESTGDPEIFAQLSRRFLGPIVSQVRQNEG</sequence>
<proteinExistence type="inferred from homology"/>
<comment type="function">
    <text evidence="1">Provides the (R)-glutamate required for cell wall biosynthesis.</text>
</comment>
<comment type="catalytic activity">
    <reaction evidence="1">
        <text>L-glutamate = D-glutamate</text>
        <dbReference type="Rhea" id="RHEA:12813"/>
        <dbReference type="ChEBI" id="CHEBI:29985"/>
        <dbReference type="ChEBI" id="CHEBI:29986"/>
        <dbReference type="EC" id="5.1.1.3"/>
    </reaction>
</comment>
<comment type="pathway">
    <text evidence="1">Cell wall biogenesis; peptidoglycan biosynthesis.</text>
</comment>
<comment type="similarity">
    <text evidence="1">Belongs to the aspartate/glutamate racemases family.</text>
</comment>
<comment type="sequence caution" evidence="2">
    <conflict type="erroneous initiation">
        <sequence resource="EMBL-CDS" id="BAA78374"/>
    </conflict>
</comment>
<comment type="sequence caution" evidence="2">
    <conflict type="erroneous initiation">
        <sequence resource="EMBL-CDS" id="BAB99902"/>
    </conflict>
</comment>
<comment type="sequence caution" evidence="2">
    <conflict type="erroneous initiation">
        <sequence resource="EMBL-CDS" id="CAF21172"/>
    </conflict>
</comment>
<name>MURI_CORGL</name>